<evidence type="ECO:0000250" key="1">
    <source>
        <dbReference type="UniProtKB" id="P46779"/>
    </source>
</evidence>
<evidence type="ECO:0000269" key="2">
    <source>
    </source>
</evidence>
<evidence type="ECO:0000269" key="3">
    <source ref="4"/>
</evidence>
<evidence type="ECO:0000305" key="4"/>
<evidence type="ECO:0007744" key="5">
    <source>
        <dbReference type="PDB" id="7CPU"/>
    </source>
</evidence>
<evidence type="ECO:0007744" key="6">
    <source>
        <dbReference type="PDB" id="7CPV"/>
    </source>
</evidence>
<gene>
    <name type="primary">Rpl28</name>
</gene>
<accession>P41105</accession>
<organism>
    <name type="scientific">Mus musculus</name>
    <name type="common">Mouse</name>
    <dbReference type="NCBI Taxonomy" id="10090"/>
    <lineage>
        <taxon>Eukaryota</taxon>
        <taxon>Metazoa</taxon>
        <taxon>Chordata</taxon>
        <taxon>Craniata</taxon>
        <taxon>Vertebrata</taxon>
        <taxon>Euteleostomi</taxon>
        <taxon>Mammalia</taxon>
        <taxon>Eutheria</taxon>
        <taxon>Euarchontoglires</taxon>
        <taxon>Glires</taxon>
        <taxon>Rodentia</taxon>
        <taxon>Myomorpha</taxon>
        <taxon>Muroidea</taxon>
        <taxon>Muridae</taxon>
        <taxon>Murinae</taxon>
        <taxon>Mus</taxon>
        <taxon>Mus</taxon>
    </lineage>
</organism>
<feature type="initiator methionine" description="Removed" evidence="3">
    <location>
        <position position="1"/>
    </location>
</feature>
<feature type="chain" id="PRO_0000122390" description="Large ribosomal subunit protein eL28">
    <location>
        <begin position="2"/>
        <end position="137"/>
    </location>
</feature>
<feature type="modified residue" description="N-acetylserine" evidence="3">
    <location>
        <position position="2"/>
    </location>
</feature>
<feature type="modified residue" description="Phosphoserine" evidence="1">
    <location>
        <position position="115"/>
    </location>
</feature>
<feature type="cross-link" description="Glycyl lysine isopeptide (Lys-Gly) (interchain with G-Cter in SUMO2)" evidence="1">
    <location>
        <position position="58"/>
    </location>
</feature>
<feature type="cross-link" description="Glycyl lysine isopeptide (Lys-Gly) (interchain with G-Cter in SUMO2)" evidence="1">
    <location>
        <position position="65"/>
    </location>
</feature>
<name>RL28_MOUSE</name>
<reference key="1">
    <citation type="journal article" date="1994" name="Gene">
        <title>Sequence and expression of a cDNA encoding the mouse homologue of the rat ribosomal protein L28.</title>
        <authorList>
            <person name="Burke P.S."/>
            <person name="Lium E."/>
            <person name="Lin C.S."/>
            <person name="Wolgemuth D.J."/>
        </authorList>
    </citation>
    <scope>NUCLEOTIDE SEQUENCE [MRNA]</scope>
    <source>
        <tissue>Testis</tissue>
    </source>
</reference>
<reference key="2">
    <citation type="journal article" date="2005" name="Science">
        <title>The transcriptional landscape of the mammalian genome.</title>
        <authorList>
            <person name="Carninci P."/>
            <person name="Kasukawa T."/>
            <person name="Katayama S."/>
            <person name="Gough J."/>
            <person name="Frith M.C."/>
            <person name="Maeda N."/>
            <person name="Oyama R."/>
            <person name="Ravasi T."/>
            <person name="Lenhard B."/>
            <person name="Wells C."/>
            <person name="Kodzius R."/>
            <person name="Shimokawa K."/>
            <person name="Bajic V.B."/>
            <person name="Brenner S.E."/>
            <person name="Batalov S."/>
            <person name="Forrest A.R."/>
            <person name="Zavolan M."/>
            <person name="Davis M.J."/>
            <person name="Wilming L.G."/>
            <person name="Aidinis V."/>
            <person name="Allen J.E."/>
            <person name="Ambesi-Impiombato A."/>
            <person name="Apweiler R."/>
            <person name="Aturaliya R.N."/>
            <person name="Bailey T.L."/>
            <person name="Bansal M."/>
            <person name="Baxter L."/>
            <person name="Beisel K.W."/>
            <person name="Bersano T."/>
            <person name="Bono H."/>
            <person name="Chalk A.M."/>
            <person name="Chiu K.P."/>
            <person name="Choudhary V."/>
            <person name="Christoffels A."/>
            <person name="Clutterbuck D.R."/>
            <person name="Crowe M.L."/>
            <person name="Dalla E."/>
            <person name="Dalrymple B.P."/>
            <person name="de Bono B."/>
            <person name="Della Gatta G."/>
            <person name="di Bernardo D."/>
            <person name="Down T."/>
            <person name="Engstrom P."/>
            <person name="Fagiolini M."/>
            <person name="Faulkner G."/>
            <person name="Fletcher C.F."/>
            <person name="Fukushima T."/>
            <person name="Furuno M."/>
            <person name="Futaki S."/>
            <person name="Gariboldi M."/>
            <person name="Georgii-Hemming P."/>
            <person name="Gingeras T.R."/>
            <person name="Gojobori T."/>
            <person name="Green R.E."/>
            <person name="Gustincich S."/>
            <person name="Harbers M."/>
            <person name="Hayashi Y."/>
            <person name="Hensch T.K."/>
            <person name="Hirokawa N."/>
            <person name="Hill D."/>
            <person name="Huminiecki L."/>
            <person name="Iacono M."/>
            <person name="Ikeo K."/>
            <person name="Iwama A."/>
            <person name="Ishikawa T."/>
            <person name="Jakt M."/>
            <person name="Kanapin A."/>
            <person name="Katoh M."/>
            <person name="Kawasawa Y."/>
            <person name="Kelso J."/>
            <person name="Kitamura H."/>
            <person name="Kitano H."/>
            <person name="Kollias G."/>
            <person name="Krishnan S.P."/>
            <person name="Kruger A."/>
            <person name="Kummerfeld S.K."/>
            <person name="Kurochkin I.V."/>
            <person name="Lareau L.F."/>
            <person name="Lazarevic D."/>
            <person name="Lipovich L."/>
            <person name="Liu J."/>
            <person name="Liuni S."/>
            <person name="McWilliam S."/>
            <person name="Madan Babu M."/>
            <person name="Madera M."/>
            <person name="Marchionni L."/>
            <person name="Matsuda H."/>
            <person name="Matsuzawa S."/>
            <person name="Miki H."/>
            <person name="Mignone F."/>
            <person name="Miyake S."/>
            <person name="Morris K."/>
            <person name="Mottagui-Tabar S."/>
            <person name="Mulder N."/>
            <person name="Nakano N."/>
            <person name="Nakauchi H."/>
            <person name="Ng P."/>
            <person name="Nilsson R."/>
            <person name="Nishiguchi S."/>
            <person name="Nishikawa S."/>
            <person name="Nori F."/>
            <person name="Ohara O."/>
            <person name="Okazaki Y."/>
            <person name="Orlando V."/>
            <person name="Pang K.C."/>
            <person name="Pavan W.J."/>
            <person name="Pavesi G."/>
            <person name="Pesole G."/>
            <person name="Petrovsky N."/>
            <person name="Piazza S."/>
            <person name="Reed J."/>
            <person name="Reid J.F."/>
            <person name="Ring B.Z."/>
            <person name="Ringwald M."/>
            <person name="Rost B."/>
            <person name="Ruan Y."/>
            <person name="Salzberg S.L."/>
            <person name="Sandelin A."/>
            <person name="Schneider C."/>
            <person name="Schoenbach C."/>
            <person name="Sekiguchi K."/>
            <person name="Semple C.A."/>
            <person name="Seno S."/>
            <person name="Sessa L."/>
            <person name="Sheng Y."/>
            <person name="Shibata Y."/>
            <person name="Shimada H."/>
            <person name="Shimada K."/>
            <person name="Silva D."/>
            <person name="Sinclair B."/>
            <person name="Sperling S."/>
            <person name="Stupka E."/>
            <person name="Sugiura K."/>
            <person name="Sultana R."/>
            <person name="Takenaka Y."/>
            <person name="Taki K."/>
            <person name="Tammoja K."/>
            <person name="Tan S.L."/>
            <person name="Tang S."/>
            <person name="Taylor M.S."/>
            <person name="Tegner J."/>
            <person name="Teichmann S.A."/>
            <person name="Ueda H.R."/>
            <person name="van Nimwegen E."/>
            <person name="Verardo R."/>
            <person name="Wei C.L."/>
            <person name="Yagi K."/>
            <person name="Yamanishi H."/>
            <person name="Zabarovsky E."/>
            <person name="Zhu S."/>
            <person name="Zimmer A."/>
            <person name="Hide W."/>
            <person name="Bult C."/>
            <person name="Grimmond S.M."/>
            <person name="Teasdale R.D."/>
            <person name="Liu E.T."/>
            <person name="Brusic V."/>
            <person name="Quackenbush J."/>
            <person name="Wahlestedt C."/>
            <person name="Mattick J.S."/>
            <person name="Hume D.A."/>
            <person name="Kai C."/>
            <person name="Sasaki D."/>
            <person name="Tomaru Y."/>
            <person name="Fukuda S."/>
            <person name="Kanamori-Katayama M."/>
            <person name="Suzuki M."/>
            <person name="Aoki J."/>
            <person name="Arakawa T."/>
            <person name="Iida J."/>
            <person name="Imamura K."/>
            <person name="Itoh M."/>
            <person name="Kato T."/>
            <person name="Kawaji H."/>
            <person name="Kawagashira N."/>
            <person name="Kawashima T."/>
            <person name="Kojima M."/>
            <person name="Kondo S."/>
            <person name="Konno H."/>
            <person name="Nakano K."/>
            <person name="Ninomiya N."/>
            <person name="Nishio T."/>
            <person name="Okada M."/>
            <person name="Plessy C."/>
            <person name="Shibata K."/>
            <person name="Shiraki T."/>
            <person name="Suzuki S."/>
            <person name="Tagami M."/>
            <person name="Waki K."/>
            <person name="Watahiki A."/>
            <person name="Okamura-Oho Y."/>
            <person name="Suzuki H."/>
            <person name="Kawai J."/>
            <person name="Hayashizaki Y."/>
        </authorList>
    </citation>
    <scope>NUCLEOTIDE SEQUENCE [LARGE SCALE MRNA]</scope>
    <source>
        <strain>C57BL/6J</strain>
        <tissue>Kidney</tissue>
    </source>
</reference>
<reference key="3">
    <citation type="journal article" date="2004" name="Genome Res.">
        <title>The status, quality, and expansion of the NIH full-length cDNA project: the Mammalian Gene Collection (MGC).</title>
        <authorList>
            <consortium name="The MGC Project Team"/>
        </authorList>
    </citation>
    <scope>NUCLEOTIDE SEQUENCE [LARGE SCALE MRNA]</scope>
    <source>
        <strain>FVB/N</strain>
        <tissue>Colon</tissue>
    </source>
</reference>
<reference key="4">
    <citation type="submission" date="2008-02" db="UniProtKB">
        <authorList>
            <person name="Bienvenut W.V."/>
            <person name="Sandilands E."/>
            <person name="Serrels B."/>
            <person name="Brunton V.G."/>
            <person name="Frame M.C."/>
        </authorList>
    </citation>
    <scope>PROTEIN SEQUENCE OF 2-20 AND 36-46</scope>
    <scope>CLEAVAGE OF INITIATOR METHIONINE</scope>
    <scope>ACETYLATION AT SER-2</scope>
    <scope>IDENTIFICATION BY MASS SPECTROMETRY</scope>
    <source>
        <tissue>Embryonic fibroblast</tissue>
    </source>
</reference>
<reference key="5">
    <citation type="journal article" date="2010" name="Cell">
        <title>A tissue-specific atlas of mouse protein phosphorylation and expression.</title>
        <authorList>
            <person name="Huttlin E.L."/>
            <person name="Jedrychowski M.P."/>
            <person name="Elias J.E."/>
            <person name="Goswami T."/>
            <person name="Rad R."/>
            <person name="Beausoleil S.A."/>
            <person name="Villen J."/>
            <person name="Haas W."/>
            <person name="Sowa M.E."/>
            <person name="Gygi S.P."/>
        </authorList>
    </citation>
    <scope>IDENTIFICATION BY MASS SPECTROMETRY [LARGE SCALE ANALYSIS]</scope>
    <source>
        <tissue>Kidney</tissue>
        <tissue>Liver</tissue>
        <tissue>Spleen</tissue>
        <tissue>Testis</tissue>
    </source>
</reference>
<reference evidence="5 6" key="6">
    <citation type="journal article" date="2022" name="Nature">
        <title>A male germ-cell-specific ribosome controls male fertility.</title>
        <authorList>
            <person name="Li H."/>
            <person name="Huo Y."/>
            <person name="He X."/>
            <person name="Yao L."/>
            <person name="Zhang H."/>
            <person name="Cui Y."/>
            <person name="Xiao H."/>
            <person name="Xie W."/>
            <person name="Zhang D."/>
            <person name="Wang Y."/>
            <person name="Zhang S."/>
            <person name="Tu H."/>
            <person name="Cheng Y."/>
            <person name="Guo Y."/>
            <person name="Cao X."/>
            <person name="Zhu Y."/>
            <person name="Jiang T."/>
            <person name="Guo X."/>
            <person name="Qin Y."/>
            <person name="Sha J."/>
        </authorList>
    </citation>
    <scope>STRUCTURE BY ELECTRON MICROSCOPY (3.03 ANGSTROMS) OF RIBOSOME</scope>
    <scope>FUNCTION</scope>
    <scope>SUBUNIT</scope>
    <scope>SUBCELLULAR LOCATION</scope>
</reference>
<protein>
    <recommendedName>
        <fullName evidence="4">Large ribosomal subunit protein eL28</fullName>
    </recommendedName>
    <alternativeName>
        <fullName>60S ribosomal protein L28</fullName>
    </alternativeName>
</protein>
<keyword id="KW-0002">3D-structure</keyword>
<keyword id="KW-0007">Acetylation</keyword>
<keyword id="KW-0963">Cytoplasm</keyword>
<keyword id="KW-0903">Direct protein sequencing</keyword>
<keyword id="KW-1017">Isopeptide bond</keyword>
<keyword id="KW-0597">Phosphoprotein</keyword>
<keyword id="KW-1185">Reference proteome</keyword>
<keyword id="KW-0687">Ribonucleoprotein</keyword>
<keyword id="KW-0689">Ribosomal protein</keyword>
<keyword id="KW-0832">Ubl conjugation</keyword>
<sequence length="137" mass="15733">MSAHLQWMVVRNCSSFLIKRNKQTYSTEPNNLKARNSFRYNGLIHRKTVGVEPAADGKGVVVVMKRRSGQRKPATSYVRTTINKNARATLSSIRHMIRKNKYRPDLRMAAIRRASAILRSQKPVVVKRKRTRPTKSS</sequence>
<proteinExistence type="evidence at protein level"/>
<comment type="function">
    <text evidence="2">Component of the large ribosomal subunit (PubMed:36517592). The ribosome is a large ribonucleoprotein complex responsible for the synthesis of proteins in the cell (PubMed:36517592).</text>
</comment>
<comment type="subunit">
    <text evidence="2">Component of the large ribosomal subunit.</text>
</comment>
<comment type="subcellular location">
    <subcellularLocation>
        <location evidence="2">Cytoplasm</location>
    </subcellularLocation>
</comment>
<comment type="similarity">
    <text evidence="4">Belongs to the eukaryotic ribosomal protein eL28 family.</text>
</comment>
<dbReference type="EMBL" id="X74856">
    <property type="protein sequence ID" value="CAA52848.1"/>
    <property type="molecule type" value="mRNA"/>
</dbReference>
<dbReference type="EMBL" id="AK018714">
    <property type="protein sequence ID" value="BAB31362.1"/>
    <property type="molecule type" value="mRNA"/>
</dbReference>
<dbReference type="EMBL" id="AK076133">
    <property type="protein sequence ID" value="BAC36209.1"/>
    <property type="molecule type" value="mRNA"/>
</dbReference>
<dbReference type="EMBL" id="BC024395">
    <property type="protein sequence ID" value="AAH24395.1"/>
    <property type="molecule type" value="mRNA"/>
</dbReference>
<dbReference type="CCDS" id="CCDS39742.1"/>
<dbReference type="PIR" id="I48738">
    <property type="entry name" value="I48738"/>
</dbReference>
<dbReference type="RefSeq" id="NP_033107.1">
    <property type="nucleotide sequence ID" value="NM_009081.2"/>
</dbReference>
<dbReference type="PDB" id="6SWA">
    <property type="method" value="EM"/>
    <property type="resolution" value="3.10 A"/>
    <property type="chains" value="p=1-137"/>
</dbReference>
<dbReference type="PDB" id="7CPU">
    <property type="method" value="EM"/>
    <property type="resolution" value="2.82 A"/>
    <property type="chains" value="Lr=1-137"/>
</dbReference>
<dbReference type="PDB" id="7CPV">
    <property type="method" value="EM"/>
    <property type="resolution" value="3.03 A"/>
    <property type="chains" value="Lr=1-137"/>
</dbReference>
<dbReference type="PDB" id="7LS1">
    <property type="method" value="EM"/>
    <property type="resolution" value="3.30 A"/>
    <property type="chains" value="k2=1-137"/>
</dbReference>
<dbReference type="PDB" id="7LS2">
    <property type="method" value="EM"/>
    <property type="resolution" value="3.10 A"/>
    <property type="chains" value="k2=1-137"/>
</dbReference>
<dbReference type="PDBsum" id="6SWA"/>
<dbReference type="PDBsum" id="7CPU"/>
<dbReference type="PDBsum" id="7CPV"/>
<dbReference type="PDBsum" id="7LS1"/>
<dbReference type="PDBsum" id="7LS2"/>
<dbReference type="EMDB" id="EMD-10321"/>
<dbReference type="EMDB" id="EMD-23500"/>
<dbReference type="EMDB" id="EMD-23501"/>
<dbReference type="EMDB" id="EMD-30432"/>
<dbReference type="EMDB" id="EMD-30433"/>
<dbReference type="SMR" id="P41105"/>
<dbReference type="BioGRID" id="202975">
    <property type="interactions" value="83"/>
</dbReference>
<dbReference type="ComplexPortal" id="CPX-5262">
    <property type="entry name" value="60S cytosolic large ribosomal subunit"/>
</dbReference>
<dbReference type="ComplexPortal" id="CPX-7662">
    <property type="entry name" value="60S cytosolic large ribosomal subunit, testis-specific variant"/>
</dbReference>
<dbReference type="ComplexPortal" id="CPX-7663">
    <property type="entry name" value="60S cytosolic large ribosomal subunit, striated muscle variant"/>
</dbReference>
<dbReference type="DIP" id="DIP-59974N"/>
<dbReference type="FunCoup" id="P41105">
    <property type="interactions" value="1759"/>
</dbReference>
<dbReference type="IntAct" id="P41105">
    <property type="interactions" value="8"/>
</dbReference>
<dbReference type="MINT" id="P41105"/>
<dbReference type="STRING" id="10090.ENSMUSP00000032597"/>
<dbReference type="GlyGen" id="P41105">
    <property type="glycosylation" value="1 site, 1 O-linked glycan (1 site)"/>
</dbReference>
<dbReference type="iPTMnet" id="P41105"/>
<dbReference type="MetOSite" id="P41105"/>
<dbReference type="PhosphoSitePlus" id="P41105"/>
<dbReference type="SwissPalm" id="P41105"/>
<dbReference type="jPOST" id="P41105"/>
<dbReference type="PaxDb" id="10090-ENSMUSP00000032597"/>
<dbReference type="PeptideAtlas" id="P41105"/>
<dbReference type="ProteomicsDB" id="299857"/>
<dbReference type="Pumba" id="P41105"/>
<dbReference type="Antibodypedia" id="46430">
    <property type="antibodies" value="176 antibodies from 25 providers"/>
</dbReference>
<dbReference type="DNASU" id="19943"/>
<dbReference type="Ensembl" id="ENSMUST00000032597.12">
    <property type="protein sequence ID" value="ENSMUSP00000032597.6"/>
    <property type="gene ID" value="ENSMUSG00000030432.13"/>
</dbReference>
<dbReference type="Ensembl" id="ENSMUST00000078432.5">
    <property type="protein sequence ID" value="ENSMUSP00000104217.2"/>
    <property type="gene ID" value="ENSMUSG00000030432.13"/>
</dbReference>
<dbReference type="GeneID" id="19943"/>
<dbReference type="KEGG" id="mmu:19943"/>
<dbReference type="UCSC" id="uc009eys.1">
    <property type="organism name" value="mouse"/>
</dbReference>
<dbReference type="AGR" id="MGI:101839"/>
<dbReference type="CTD" id="6158"/>
<dbReference type="MGI" id="MGI:101839">
    <property type="gene designation" value="Rpl28"/>
</dbReference>
<dbReference type="VEuPathDB" id="HostDB:ENSMUSG00000030432"/>
<dbReference type="eggNOG" id="KOG3412">
    <property type="taxonomic scope" value="Eukaryota"/>
</dbReference>
<dbReference type="GeneTree" id="ENSGT00390000008732"/>
<dbReference type="HOGENOM" id="CLU_106801_1_0_1"/>
<dbReference type="InParanoid" id="P41105"/>
<dbReference type="OMA" id="WMIIRNC"/>
<dbReference type="OrthoDB" id="338850at2759"/>
<dbReference type="PhylomeDB" id="P41105"/>
<dbReference type="TreeFam" id="TF300173"/>
<dbReference type="Reactome" id="R-MMU-156827">
    <property type="pathway name" value="L13a-mediated translational silencing of Ceruloplasmin expression"/>
</dbReference>
<dbReference type="Reactome" id="R-MMU-1799339">
    <property type="pathway name" value="SRP-dependent cotranslational protein targeting to membrane"/>
</dbReference>
<dbReference type="Reactome" id="R-MMU-6791226">
    <property type="pathway name" value="Major pathway of rRNA processing in the nucleolus and cytosol"/>
</dbReference>
<dbReference type="Reactome" id="R-MMU-72689">
    <property type="pathway name" value="Formation of a pool of free 40S subunits"/>
</dbReference>
<dbReference type="Reactome" id="R-MMU-72706">
    <property type="pathway name" value="GTP hydrolysis and joining of the 60S ribosomal subunit"/>
</dbReference>
<dbReference type="Reactome" id="R-MMU-975956">
    <property type="pathway name" value="Nonsense Mediated Decay (NMD) independent of the Exon Junction Complex (EJC)"/>
</dbReference>
<dbReference type="Reactome" id="R-MMU-975957">
    <property type="pathway name" value="Nonsense Mediated Decay (NMD) enhanced by the Exon Junction Complex (EJC)"/>
</dbReference>
<dbReference type="BioGRID-ORCS" id="19943">
    <property type="hits" value="28 hits in 79 CRISPR screens"/>
</dbReference>
<dbReference type="CD-CODE" id="CE726F99">
    <property type="entry name" value="Postsynaptic density"/>
</dbReference>
<dbReference type="ChiTaRS" id="Rpl28">
    <property type="organism name" value="mouse"/>
</dbReference>
<dbReference type="PRO" id="PR:P41105"/>
<dbReference type="Proteomes" id="UP000000589">
    <property type="component" value="Chromosome 7"/>
</dbReference>
<dbReference type="RNAct" id="P41105">
    <property type="molecule type" value="protein"/>
</dbReference>
<dbReference type="Bgee" id="ENSMUSG00000030432">
    <property type="expression patterns" value="Expressed in urinary bladder and 64 other cell types or tissues"/>
</dbReference>
<dbReference type="ExpressionAtlas" id="P41105">
    <property type="expression patterns" value="baseline and differential"/>
</dbReference>
<dbReference type="GO" id="GO:0044297">
    <property type="term" value="C:cell body"/>
    <property type="evidence" value="ECO:0007669"/>
    <property type="project" value="Ensembl"/>
</dbReference>
<dbReference type="GO" id="GO:0005737">
    <property type="term" value="C:cytoplasm"/>
    <property type="evidence" value="ECO:0000314"/>
    <property type="project" value="ComplexPortal"/>
</dbReference>
<dbReference type="GO" id="GO:0036464">
    <property type="term" value="C:cytoplasmic ribonucleoprotein granule"/>
    <property type="evidence" value="ECO:0007669"/>
    <property type="project" value="Ensembl"/>
</dbReference>
<dbReference type="GO" id="GO:0005829">
    <property type="term" value="C:cytosol"/>
    <property type="evidence" value="ECO:0000304"/>
    <property type="project" value="Reactome"/>
</dbReference>
<dbReference type="GO" id="GO:0022625">
    <property type="term" value="C:cytosolic large ribosomal subunit"/>
    <property type="evidence" value="ECO:0000314"/>
    <property type="project" value="UniProtKB"/>
</dbReference>
<dbReference type="GO" id="GO:0030425">
    <property type="term" value="C:dendrite"/>
    <property type="evidence" value="ECO:0007669"/>
    <property type="project" value="Ensembl"/>
</dbReference>
<dbReference type="GO" id="GO:0098794">
    <property type="term" value="C:postsynapse"/>
    <property type="evidence" value="ECO:0000303"/>
    <property type="project" value="SynGO"/>
</dbReference>
<dbReference type="GO" id="GO:0098793">
    <property type="term" value="C:presynapse"/>
    <property type="evidence" value="ECO:0000303"/>
    <property type="project" value="SynGO"/>
</dbReference>
<dbReference type="GO" id="GO:0005840">
    <property type="term" value="C:ribosome"/>
    <property type="evidence" value="ECO:0000303"/>
    <property type="project" value="SynGO"/>
</dbReference>
<dbReference type="GO" id="GO:0045202">
    <property type="term" value="C:synapse"/>
    <property type="evidence" value="ECO:0000314"/>
    <property type="project" value="SynGO"/>
</dbReference>
<dbReference type="GO" id="GO:0003735">
    <property type="term" value="F:structural constituent of ribosome"/>
    <property type="evidence" value="ECO:0000314"/>
    <property type="project" value="UniProtKB"/>
</dbReference>
<dbReference type="GO" id="GO:0002181">
    <property type="term" value="P:cytoplasmic translation"/>
    <property type="evidence" value="ECO:0000303"/>
    <property type="project" value="ComplexPortal"/>
</dbReference>
<dbReference type="GO" id="GO:0140242">
    <property type="term" value="P:translation at postsynapse"/>
    <property type="evidence" value="ECO:0000303"/>
    <property type="project" value="SynGO"/>
</dbReference>
<dbReference type="GO" id="GO:0140236">
    <property type="term" value="P:translation at presynapse"/>
    <property type="evidence" value="ECO:0000303"/>
    <property type="project" value="SynGO"/>
</dbReference>
<dbReference type="FunFam" id="3.30.390.110:FF:000002">
    <property type="entry name" value="60S ribosomal protein L28"/>
    <property type="match status" value="1"/>
</dbReference>
<dbReference type="Gene3D" id="3.30.390.110">
    <property type="match status" value="1"/>
</dbReference>
<dbReference type="InterPro" id="IPR002672">
    <property type="entry name" value="Ribosomal_eL28"/>
</dbReference>
<dbReference type="InterPro" id="IPR029004">
    <property type="entry name" value="Ribosomal_eL28/Mak16"/>
</dbReference>
<dbReference type="PANTHER" id="PTHR10544">
    <property type="entry name" value="60S RIBOSOMAL PROTEIN L28"/>
    <property type="match status" value="1"/>
</dbReference>
<dbReference type="Pfam" id="PF01778">
    <property type="entry name" value="Ribosomal_L28e"/>
    <property type="match status" value="1"/>
</dbReference>